<protein>
    <recommendedName>
        <fullName>Actin</fullName>
        <ecNumber evidence="1">3.6.4.-</ecNumber>
    </recommendedName>
</protein>
<reference key="1">
    <citation type="submission" date="1999-11" db="EMBL/GenBank/DDBJ databases">
        <title>An actin gene in the basidiomycete Coprinus cinereus.</title>
        <authorList>
            <person name="Kamada T."/>
        </authorList>
    </citation>
    <scope>NUCLEOTIDE SEQUENCE [GENOMIC DNA]</scope>
</reference>
<reference key="2">
    <citation type="journal article" date="2010" name="Proc. Natl. Acad. Sci. U.S.A.">
        <title>Insights into evolution of multicellular fungi from the assembled chromosomes of the mushroom Coprinopsis cinerea (Coprinus cinereus).</title>
        <authorList>
            <person name="Stajich J.E."/>
            <person name="Wilke S.K."/>
            <person name="Ahren D."/>
            <person name="Au C.H."/>
            <person name="Birren B.W."/>
            <person name="Borodovsky M."/>
            <person name="Burns C."/>
            <person name="Canbaeck B."/>
            <person name="Casselton L.A."/>
            <person name="Cheng C.K."/>
            <person name="Deng J."/>
            <person name="Dietrich F.S."/>
            <person name="Fargo D.C."/>
            <person name="Farman M.L."/>
            <person name="Gathman A.C."/>
            <person name="Goldberg J."/>
            <person name="Guigo R."/>
            <person name="Hoegger P.J."/>
            <person name="Hooker J.B."/>
            <person name="Huggins A."/>
            <person name="James T.Y."/>
            <person name="Kamada T."/>
            <person name="Kilaru S."/>
            <person name="Kodira C."/>
            <person name="Kuees U."/>
            <person name="Kupfer D."/>
            <person name="Kwan H.S."/>
            <person name="Lomsadze A."/>
            <person name="Li W."/>
            <person name="Lilly W.W."/>
            <person name="Ma L.-J."/>
            <person name="Mackey A.J."/>
            <person name="Manning G."/>
            <person name="Martin F."/>
            <person name="Muraguchi H."/>
            <person name="Natvig D.O."/>
            <person name="Palmerini H."/>
            <person name="Ramesh M.A."/>
            <person name="Rehmeyer C.J."/>
            <person name="Roe B.A."/>
            <person name="Shenoy N."/>
            <person name="Stanke M."/>
            <person name="Ter-Hovhannisyan V."/>
            <person name="Tunlid A."/>
            <person name="Velagapudi R."/>
            <person name="Vision T.J."/>
            <person name="Zeng Q."/>
            <person name="Zolan M.E."/>
            <person name="Pukkila P.J."/>
        </authorList>
    </citation>
    <scope>NUCLEOTIDE SEQUENCE [LARGE SCALE GENOMIC DNA]</scope>
    <source>
        <strain>Okayama-7 / 130 / ATCC MYA-4618 / FGSC 9003</strain>
    </source>
</reference>
<keyword id="KW-0067">ATP-binding</keyword>
<keyword id="KW-0963">Cytoplasm</keyword>
<keyword id="KW-0206">Cytoskeleton</keyword>
<keyword id="KW-0378">Hydrolase</keyword>
<keyword id="KW-0547">Nucleotide-binding</keyword>
<keyword id="KW-1185">Reference proteome</keyword>
<proteinExistence type="inferred from homology"/>
<feature type="chain" id="PRO_0000088913" description="Actin">
    <location>
        <begin position="1"/>
        <end position="375"/>
    </location>
</feature>
<organism>
    <name type="scientific">Coprinopsis cinerea (strain Okayama-7 / 130 / ATCC MYA-4618 / FGSC 9003)</name>
    <name type="common">Inky cap fungus</name>
    <name type="synonym">Hormographiella aspergillata</name>
    <dbReference type="NCBI Taxonomy" id="240176"/>
    <lineage>
        <taxon>Eukaryota</taxon>
        <taxon>Fungi</taxon>
        <taxon>Dikarya</taxon>
        <taxon>Basidiomycota</taxon>
        <taxon>Agaricomycotina</taxon>
        <taxon>Agaricomycetes</taxon>
        <taxon>Agaricomycetidae</taxon>
        <taxon>Agaricales</taxon>
        <taxon>Agaricineae</taxon>
        <taxon>Psathyrellaceae</taxon>
        <taxon>Coprinopsis</taxon>
    </lineage>
</organism>
<sequence>MEDEVAALVIDNGSGMCKAGFAGDDAPRAVFPSIVGRPRHQGVMVGMGQKDSYVGDEAQSKRGILTLKYPIEHGIVTNWDDMEKIWHHTFYNELRVAPEEHPVLLTEAPLNPKANREKMTQIMFETFNAPAFYVAIQAVLSLYASGRTTGIVLDSGDGVTHTVPIYEGFALPHAILRLDLAGRDLTDYLIKCLGERGYPFTTTAEREIVRDIKEKLCYVALDFEQEMQTAAQSSSLEKSYELPDGQVITIGNERFRAPEALFQPAFLGLEAAGIHETTYNSIFKCDLDIRRDLYGNVVLSGGTTMFSGIADRMQKELLALSPASMRVKIVAPLERKYSVWIGGSILASLSTFQNLWCSKQEYDESGPGIVHRKCF</sequence>
<comment type="function">
    <text>Actins are highly conserved proteins that are involved in various types of cell motility and are ubiquitously expressed in all eukaryotic cells.</text>
</comment>
<comment type="catalytic activity">
    <reaction evidence="1">
        <text>ATP + H2O = ADP + phosphate + H(+)</text>
        <dbReference type="Rhea" id="RHEA:13065"/>
        <dbReference type="ChEBI" id="CHEBI:15377"/>
        <dbReference type="ChEBI" id="CHEBI:15378"/>
        <dbReference type="ChEBI" id="CHEBI:30616"/>
        <dbReference type="ChEBI" id="CHEBI:43474"/>
        <dbReference type="ChEBI" id="CHEBI:456216"/>
    </reaction>
</comment>
<comment type="subcellular location">
    <subcellularLocation>
        <location>Cytoplasm</location>
        <location>Cytoskeleton</location>
    </subcellularLocation>
</comment>
<comment type="similarity">
    <text evidence="2">Belongs to the actin family.</text>
</comment>
<evidence type="ECO:0000250" key="1">
    <source>
        <dbReference type="UniProtKB" id="P60010"/>
    </source>
</evidence>
<evidence type="ECO:0000305" key="2"/>
<accession>Q9UVX4</accession>
<accession>A8P7I2</accession>
<gene>
    <name type="primary">ACT1</name>
    <name type="ORF">CC1G_08232</name>
</gene>
<dbReference type="EC" id="3.6.4.-" evidence="1"/>
<dbReference type="EMBL" id="AB034637">
    <property type="protein sequence ID" value="BAA86222.1"/>
    <property type="molecule type" value="Genomic_DNA"/>
</dbReference>
<dbReference type="EMBL" id="AACS02000005">
    <property type="protein sequence ID" value="EAU82481.1"/>
    <property type="molecule type" value="Genomic_DNA"/>
</dbReference>
<dbReference type="RefSeq" id="XP_001839365.1">
    <property type="nucleotide sequence ID" value="XM_001839313.2"/>
</dbReference>
<dbReference type="SMR" id="Q9UVX4"/>
<dbReference type="FunCoup" id="Q9UVX4">
    <property type="interactions" value="194"/>
</dbReference>
<dbReference type="STRING" id="240176.Q9UVX4"/>
<dbReference type="GeneID" id="6015978"/>
<dbReference type="KEGG" id="cci:CC1G_08232"/>
<dbReference type="VEuPathDB" id="FungiDB:CC1G_08232"/>
<dbReference type="eggNOG" id="KOG0676">
    <property type="taxonomic scope" value="Eukaryota"/>
</dbReference>
<dbReference type="HOGENOM" id="CLU_027965_0_2_1"/>
<dbReference type="InParanoid" id="Q9UVX4"/>
<dbReference type="OMA" id="FHTTAER"/>
<dbReference type="OrthoDB" id="5132116at2759"/>
<dbReference type="Proteomes" id="UP000001861">
    <property type="component" value="Unassembled WGS sequence"/>
</dbReference>
<dbReference type="GO" id="GO:0005737">
    <property type="term" value="C:cytoplasm"/>
    <property type="evidence" value="ECO:0007669"/>
    <property type="project" value="UniProtKB-KW"/>
</dbReference>
<dbReference type="GO" id="GO:0005856">
    <property type="term" value="C:cytoskeleton"/>
    <property type="evidence" value="ECO:0007669"/>
    <property type="project" value="UniProtKB-SubCell"/>
</dbReference>
<dbReference type="GO" id="GO:0005524">
    <property type="term" value="F:ATP binding"/>
    <property type="evidence" value="ECO:0007669"/>
    <property type="project" value="UniProtKB-KW"/>
</dbReference>
<dbReference type="GO" id="GO:0016787">
    <property type="term" value="F:hydrolase activity"/>
    <property type="evidence" value="ECO:0007669"/>
    <property type="project" value="UniProtKB-KW"/>
</dbReference>
<dbReference type="CDD" id="cd10224">
    <property type="entry name" value="ASKHA_NBD_actin"/>
    <property type="match status" value="1"/>
</dbReference>
<dbReference type="FunFam" id="2.30.36.70:FF:000001">
    <property type="entry name" value="Actin, alpha skeletal muscle"/>
    <property type="match status" value="1"/>
</dbReference>
<dbReference type="FunFam" id="3.30.420.40:FF:000291">
    <property type="entry name" value="Actin, alpha skeletal muscle"/>
    <property type="match status" value="1"/>
</dbReference>
<dbReference type="FunFam" id="3.90.640.10:FF:000047">
    <property type="entry name" value="Actin, alpha skeletal muscle"/>
    <property type="match status" value="1"/>
</dbReference>
<dbReference type="FunFam" id="3.30.420.40:FF:000404">
    <property type="entry name" value="Major actin"/>
    <property type="match status" value="1"/>
</dbReference>
<dbReference type="FunFam" id="3.30.420.40:FF:000058">
    <property type="entry name" value="Putative actin-related protein 5"/>
    <property type="match status" value="1"/>
</dbReference>
<dbReference type="Gene3D" id="3.30.420.40">
    <property type="match status" value="2"/>
</dbReference>
<dbReference type="Gene3D" id="3.90.640.10">
    <property type="entry name" value="Actin, Chain A, domain 4"/>
    <property type="match status" value="1"/>
</dbReference>
<dbReference type="InterPro" id="IPR004000">
    <property type="entry name" value="Actin"/>
</dbReference>
<dbReference type="InterPro" id="IPR020902">
    <property type="entry name" value="Actin/actin-like_CS"/>
</dbReference>
<dbReference type="InterPro" id="IPR004001">
    <property type="entry name" value="Actin_CS"/>
</dbReference>
<dbReference type="InterPro" id="IPR043129">
    <property type="entry name" value="ATPase_NBD"/>
</dbReference>
<dbReference type="PANTHER" id="PTHR11937">
    <property type="entry name" value="ACTIN"/>
    <property type="match status" value="1"/>
</dbReference>
<dbReference type="Pfam" id="PF00022">
    <property type="entry name" value="Actin"/>
    <property type="match status" value="1"/>
</dbReference>
<dbReference type="PRINTS" id="PR00190">
    <property type="entry name" value="ACTIN"/>
</dbReference>
<dbReference type="SMART" id="SM00268">
    <property type="entry name" value="ACTIN"/>
    <property type="match status" value="1"/>
</dbReference>
<dbReference type="SUPFAM" id="SSF53067">
    <property type="entry name" value="Actin-like ATPase domain"/>
    <property type="match status" value="2"/>
</dbReference>
<dbReference type="PROSITE" id="PS00406">
    <property type="entry name" value="ACTINS_1"/>
    <property type="match status" value="1"/>
</dbReference>
<dbReference type="PROSITE" id="PS00432">
    <property type="entry name" value="ACTINS_2"/>
    <property type="match status" value="1"/>
</dbReference>
<dbReference type="PROSITE" id="PS01132">
    <property type="entry name" value="ACTINS_ACT_LIKE"/>
    <property type="match status" value="1"/>
</dbReference>
<name>ACT_COPC7</name>